<gene>
    <name type="primary">pno1</name>
    <name type="ORF">TTpA007f20.1</name>
</gene>
<organism>
    <name type="scientific">Xenopus tropicalis</name>
    <name type="common">Western clawed frog</name>
    <name type="synonym">Silurana tropicalis</name>
    <dbReference type="NCBI Taxonomy" id="8364"/>
    <lineage>
        <taxon>Eukaryota</taxon>
        <taxon>Metazoa</taxon>
        <taxon>Chordata</taxon>
        <taxon>Craniata</taxon>
        <taxon>Vertebrata</taxon>
        <taxon>Euteleostomi</taxon>
        <taxon>Amphibia</taxon>
        <taxon>Batrachia</taxon>
        <taxon>Anura</taxon>
        <taxon>Pipoidea</taxon>
        <taxon>Pipidae</taxon>
        <taxon>Xenopodinae</taxon>
        <taxon>Xenopus</taxon>
        <taxon>Silurana</taxon>
    </lineage>
</organism>
<feature type="chain" id="PRO_0000270547" description="RNA-binding protein PNO1">
    <location>
        <begin position="1"/>
        <end position="236"/>
    </location>
</feature>
<feature type="domain" description="KH">
    <location>
        <begin position="152"/>
        <end position="209"/>
    </location>
</feature>
<feature type="region of interest" description="Disordered" evidence="2">
    <location>
        <begin position="1"/>
        <end position="59"/>
    </location>
</feature>
<feature type="compositionally biased region" description="Basic and acidic residues" evidence="2">
    <location>
        <begin position="26"/>
        <end position="43"/>
    </location>
</feature>
<proteinExistence type="evidence at transcript level"/>
<reference key="1">
    <citation type="submission" date="2006-10" db="EMBL/GenBank/DDBJ databases">
        <authorList>
            <consortium name="Sanger Xenopus tropicalis EST/cDNA project"/>
        </authorList>
    </citation>
    <scope>NUCLEOTIDE SEQUENCE [LARGE SCALE MRNA]</scope>
    <source>
        <tissue>Tadpole</tissue>
    </source>
</reference>
<reference key="2">
    <citation type="submission" date="2004-07" db="EMBL/GenBank/DDBJ databases">
        <authorList>
            <consortium name="NIH - Xenopus Gene Collection (XGC) project"/>
        </authorList>
    </citation>
    <scope>NUCLEOTIDE SEQUENCE [LARGE SCALE MRNA]</scope>
    <source>
        <tissue>Embryo</tissue>
    </source>
</reference>
<comment type="function">
    <text evidence="1">Part of the small subunit (SSU) processome, first precursor of the small eukaryotic ribosomal subunit. During the assembly of the SSU processome in the nucleolus, many ribosome biogenesis factors, an RNA chaperone and ribosomal proteins associate with the nascent pre-rRNA and work in concert to generate RNA folding, modifications, rearrangements and cleavage as well as targeted degradation of pre-ribosomal RNA by the RNA exosome. Positively regulates dimethylation of two adjacent adenosines in the loop of a conserved hairpin near the 3'-end of 18S rRNA.</text>
</comment>
<comment type="subunit">
    <text evidence="1">Part of the small subunit (SSU) processome, composed of more than 70 proteins and the RNA chaperone small nucleolar RNA (snoRNA) U3.</text>
</comment>
<comment type="subcellular location">
    <subcellularLocation>
        <location evidence="1">Nucleus</location>
        <location evidence="1">Nucleolus</location>
    </subcellularLocation>
</comment>
<comment type="similarity">
    <text evidence="3">Belongs to the PNO1 family.</text>
</comment>
<keyword id="KW-0539">Nucleus</keyword>
<keyword id="KW-1185">Reference proteome</keyword>
<keyword id="KW-0694">RNA-binding</keyword>
<name>PNO1_XENTR</name>
<accession>Q6DDB9</accession>
<evidence type="ECO:0000250" key="1">
    <source>
        <dbReference type="UniProtKB" id="Q9NRX1"/>
    </source>
</evidence>
<evidence type="ECO:0000256" key="2">
    <source>
        <dbReference type="SAM" id="MobiDB-lite"/>
    </source>
</evidence>
<evidence type="ECO:0000305" key="3"/>
<dbReference type="EMBL" id="CR848253">
    <property type="protein sequence ID" value="CAJ83155.1"/>
    <property type="molecule type" value="mRNA"/>
</dbReference>
<dbReference type="EMBL" id="BC077670">
    <property type="protein sequence ID" value="AAH77670.1"/>
    <property type="molecule type" value="mRNA"/>
</dbReference>
<dbReference type="RefSeq" id="NP_001005132.1">
    <property type="nucleotide sequence ID" value="NM_001005132.2"/>
</dbReference>
<dbReference type="SMR" id="Q6DDB9"/>
<dbReference type="FunCoup" id="Q6DDB9">
    <property type="interactions" value="1971"/>
</dbReference>
<dbReference type="STRING" id="8364.ENSXETP00000007882"/>
<dbReference type="PaxDb" id="8364-ENSXETP00000037784"/>
<dbReference type="DNASU" id="448715"/>
<dbReference type="GeneID" id="448715"/>
<dbReference type="KEGG" id="xtr:448715"/>
<dbReference type="AGR" id="Xenbase:XB-GENE-491293"/>
<dbReference type="CTD" id="56902"/>
<dbReference type="Xenbase" id="XB-GENE-491293">
    <property type="gene designation" value="pno1"/>
</dbReference>
<dbReference type="eggNOG" id="KOG3273">
    <property type="taxonomic scope" value="Eukaryota"/>
</dbReference>
<dbReference type="HOGENOM" id="CLU_064992_2_0_1"/>
<dbReference type="InParanoid" id="Q6DDB9"/>
<dbReference type="OMA" id="TPLRNNW"/>
<dbReference type="OrthoDB" id="1932641at2759"/>
<dbReference type="PhylomeDB" id="Q6DDB9"/>
<dbReference type="Proteomes" id="UP000008143">
    <property type="component" value="Chromosome 5"/>
</dbReference>
<dbReference type="Bgee" id="ENSXETG00000017349">
    <property type="expression patterns" value="Expressed in heart and 21 other cell types or tissues"/>
</dbReference>
<dbReference type="GO" id="GO:0005730">
    <property type="term" value="C:nucleolus"/>
    <property type="evidence" value="ECO:0000250"/>
    <property type="project" value="UniProtKB"/>
</dbReference>
<dbReference type="GO" id="GO:0032040">
    <property type="term" value="C:small-subunit processome"/>
    <property type="evidence" value="ECO:0000250"/>
    <property type="project" value="UniProtKB"/>
</dbReference>
<dbReference type="GO" id="GO:0003723">
    <property type="term" value="F:RNA binding"/>
    <property type="evidence" value="ECO:0007669"/>
    <property type="project" value="UniProtKB-KW"/>
</dbReference>
<dbReference type="GO" id="GO:0042274">
    <property type="term" value="P:ribosomal small subunit biogenesis"/>
    <property type="evidence" value="ECO:0000250"/>
    <property type="project" value="UniProtKB"/>
</dbReference>
<dbReference type="CDD" id="cd22391">
    <property type="entry name" value="KH-I_PNO1_rpt1"/>
    <property type="match status" value="1"/>
</dbReference>
<dbReference type="CDD" id="cd22392">
    <property type="entry name" value="KH-I_PNO1_rpt2"/>
    <property type="match status" value="1"/>
</dbReference>
<dbReference type="FunFam" id="3.30.1370.10:FF:000009">
    <property type="entry name" value="RNA-binding protein PNO1"/>
    <property type="match status" value="1"/>
</dbReference>
<dbReference type="FunFam" id="3.30.1370.10:FF:000048">
    <property type="entry name" value="RNA-binding protein PNO1 isoform X2"/>
    <property type="match status" value="1"/>
</dbReference>
<dbReference type="Gene3D" id="3.30.1370.10">
    <property type="entry name" value="K Homology domain, type 1"/>
    <property type="match status" value="2"/>
</dbReference>
<dbReference type="InterPro" id="IPR055212">
    <property type="entry name" value="KH-I_PNO1_first"/>
</dbReference>
<dbReference type="InterPro" id="IPR004087">
    <property type="entry name" value="KH_dom"/>
</dbReference>
<dbReference type="InterPro" id="IPR036612">
    <property type="entry name" value="KH_dom_type_1_sf"/>
</dbReference>
<dbReference type="InterPro" id="IPR055211">
    <property type="entry name" value="KH_PNO1_2nd"/>
</dbReference>
<dbReference type="InterPro" id="IPR041174">
    <property type="entry name" value="KRR1-like_KH1"/>
</dbReference>
<dbReference type="PANTHER" id="PTHR12826">
    <property type="entry name" value="RIBONUCLEASE Y"/>
    <property type="match status" value="1"/>
</dbReference>
<dbReference type="PANTHER" id="PTHR12826:SF13">
    <property type="entry name" value="RNA-BINDING PROTEIN PNO1"/>
    <property type="match status" value="1"/>
</dbReference>
<dbReference type="Pfam" id="PF17903">
    <property type="entry name" value="KH_KRR1_1st"/>
    <property type="match status" value="1"/>
</dbReference>
<dbReference type="Pfam" id="PF22891">
    <property type="entry name" value="KH_PNO1_2nd"/>
    <property type="match status" value="1"/>
</dbReference>
<dbReference type="SMART" id="SM00322">
    <property type="entry name" value="KH"/>
    <property type="match status" value="1"/>
</dbReference>
<dbReference type="SUPFAM" id="SSF54791">
    <property type="entry name" value="Eukaryotic type KH-domain (KH-domain type I)"/>
    <property type="match status" value="1"/>
</dbReference>
<protein>
    <recommendedName>
        <fullName>RNA-binding protein PNO1</fullName>
    </recommendedName>
</protein>
<sequence>METESAAASGESFTSVTSKKTRKRRAAEERPMDTGEQPSKRPDFPPISGDKLMGDKDEMRKVPVPSHRYTPLKENWMKIFTPIVEHLQLQVRFNLKTRNVEIKTCKETTDVGALTKATDFVRAFILGFQVEDALALVRLDDLFLESFEVTDVKPLKGDHLSRAIGRIAGKGGKTKFTIENVTRTRIVLADSKIHILGSFQNIKMARTAICNLILGSPPSKVYGNIRAVASRAADRF</sequence>